<proteinExistence type="inferred from homology"/>
<sequence>MSDQQQPPVYKIALGIEYDGSRYYGWQRQNEVRSVQEKLEKALSQVANEPITVFCAGRTDAGVHGTGQVVHFETTAQRKDAAWTLGVNANLPGDIAVRWVKAVPDDFHARFSATARRYRYIIYNHRLRPAVLSKGVTHFYEPLDAERMHRAAQCLLGENDFTSFRAVQCQSRTPWRNVMHINVTRHGPYVVVDIKANAFVHHMVRNIVGSLMEVGAHNQPESWIAELLAAKDRTLAAATAKAEGLYLVAVDYPDRYDLPKPPMGPLFLAD</sequence>
<organism>
    <name type="scientific">Escherichia coli O127:H6 (strain E2348/69 / EPEC)</name>
    <dbReference type="NCBI Taxonomy" id="574521"/>
    <lineage>
        <taxon>Bacteria</taxon>
        <taxon>Pseudomonadati</taxon>
        <taxon>Pseudomonadota</taxon>
        <taxon>Gammaproteobacteria</taxon>
        <taxon>Enterobacterales</taxon>
        <taxon>Enterobacteriaceae</taxon>
        <taxon>Escherichia</taxon>
    </lineage>
</organism>
<reference key="1">
    <citation type="journal article" date="2009" name="J. Bacteriol.">
        <title>Complete genome sequence and comparative genome analysis of enteropathogenic Escherichia coli O127:H6 strain E2348/69.</title>
        <authorList>
            <person name="Iguchi A."/>
            <person name="Thomson N.R."/>
            <person name="Ogura Y."/>
            <person name="Saunders D."/>
            <person name="Ooka T."/>
            <person name="Henderson I.R."/>
            <person name="Harris D."/>
            <person name="Asadulghani M."/>
            <person name="Kurokawa K."/>
            <person name="Dean P."/>
            <person name="Kenny B."/>
            <person name="Quail M.A."/>
            <person name="Thurston S."/>
            <person name="Dougan G."/>
            <person name="Hayashi T."/>
            <person name="Parkhill J."/>
            <person name="Frankel G."/>
        </authorList>
    </citation>
    <scope>NUCLEOTIDE SEQUENCE [LARGE SCALE GENOMIC DNA]</scope>
    <source>
        <strain>E2348/69 / EPEC</strain>
    </source>
</reference>
<name>TRUA_ECO27</name>
<accession>B7UFX6</accession>
<protein>
    <recommendedName>
        <fullName evidence="1">tRNA pseudouridine synthase A</fullName>
        <ecNumber evidence="1">5.4.99.12</ecNumber>
    </recommendedName>
    <alternativeName>
        <fullName evidence="1">tRNA pseudouridine(38-40) synthase</fullName>
    </alternativeName>
    <alternativeName>
        <fullName evidence="1">tRNA pseudouridylate synthase I</fullName>
    </alternativeName>
    <alternativeName>
        <fullName evidence="1">tRNA-uridine isomerase I</fullName>
    </alternativeName>
</protein>
<evidence type="ECO:0000255" key="1">
    <source>
        <dbReference type="HAMAP-Rule" id="MF_00171"/>
    </source>
</evidence>
<gene>
    <name evidence="1" type="primary">truA</name>
    <name type="ordered locus">E2348C_2458</name>
</gene>
<comment type="function">
    <text evidence="1">Formation of pseudouridine at positions 38, 39 and 40 in the anticodon stem and loop of transfer RNAs.</text>
</comment>
<comment type="catalytic activity">
    <reaction evidence="1">
        <text>uridine(38/39/40) in tRNA = pseudouridine(38/39/40) in tRNA</text>
        <dbReference type="Rhea" id="RHEA:22376"/>
        <dbReference type="Rhea" id="RHEA-COMP:10085"/>
        <dbReference type="Rhea" id="RHEA-COMP:10087"/>
        <dbReference type="ChEBI" id="CHEBI:65314"/>
        <dbReference type="ChEBI" id="CHEBI:65315"/>
        <dbReference type="EC" id="5.4.99.12"/>
    </reaction>
</comment>
<comment type="subunit">
    <text evidence="1">Homodimer.</text>
</comment>
<comment type="similarity">
    <text evidence="1">Belongs to the tRNA pseudouridine synthase TruA family.</text>
</comment>
<dbReference type="EC" id="5.4.99.12" evidence="1"/>
<dbReference type="EMBL" id="FM180568">
    <property type="protein sequence ID" value="CAS10006.1"/>
    <property type="molecule type" value="Genomic_DNA"/>
</dbReference>
<dbReference type="RefSeq" id="WP_001283598.1">
    <property type="nucleotide sequence ID" value="NC_011601.1"/>
</dbReference>
<dbReference type="SMR" id="B7UFX6"/>
<dbReference type="KEGG" id="ecg:E2348C_2458"/>
<dbReference type="HOGENOM" id="CLU_014673_0_2_6"/>
<dbReference type="Proteomes" id="UP000008205">
    <property type="component" value="Chromosome"/>
</dbReference>
<dbReference type="GO" id="GO:0003723">
    <property type="term" value="F:RNA binding"/>
    <property type="evidence" value="ECO:0007669"/>
    <property type="project" value="InterPro"/>
</dbReference>
<dbReference type="GO" id="GO:0160147">
    <property type="term" value="F:tRNA pseudouridine(38-40) synthase activity"/>
    <property type="evidence" value="ECO:0007669"/>
    <property type="project" value="UniProtKB-EC"/>
</dbReference>
<dbReference type="GO" id="GO:0031119">
    <property type="term" value="P:tRNA pseudouridine synthesis"/>
    <property type="evidence" value="ECO:0007669"/>
    <property type="project" value="UniProtKB-UniRule"/>
</dbReference>
<dbReference type="CDD" id="cd02570">
    <property type="entry name" value="PseudoU_synth_EcTruA"/>
    <property type="match status" value="1"/>
</dbReference>
<dbReference type="FunFam" id="3.30.70.580:FF:000001">
    <property type="entry name" value="tRNA pseudouridine synthase A"/>
    <property type="match status" value="1"/>
</dbReference>
<dbReference type="FunFam" id="3.30.70.660:FF:000001">
    <property type="entry name" value="tRNA pseudouridine synthase A"/>
    <property type="match status" value="1"/>
</dbReference>
<dbReference type="Gene3D" id="3.30.70.660">
    <property type="entry name" value="Pseudouridine synthase I, catalytic domain, C-terminal subdomain"/>
    <property type="match status" value="1"/>
</dbReference>
<dbReference type="Gene3D" id="3.30.70.580">
    <property type="entry name" value="Pseudouridine synthase I, catalytic domain, N-terminal subdomain"/>
    <property type="match status" value="1"/>
</dbReference>
<dbReference type="HAMAP" id="MF_00171">
    <property type="entry name" value="TruA"/>
    <property type="match status" value="1"/>
</dbReference>
<dbReference type="InterPro" id="IPR020103">
    <property type="entry name" value="PsdUridine_synth_cat_dom_sf"/>
</dbReference>
<dbReference type="InterPro" id="IPR001406">
    <property type="entry name" value="PsdUridine_synth_TruA"/>
</dbReference>
<dbReference type="InterPro" id="IPR020097">
    <property type="entry name" value="PsdUridine_synth_TruA_a/b_dom"/>
</dbReference>
<dbReference type="InterPro" id="IPR020095">
    <property type="entry name" value="PsdUridine_synth_TruA_C"/>
</dbReference>
<dbReference type="InterPro" id="IPR020094">
    <property type="entry name" value="TruA/RsuA/RluB/E/F_N"/>
</dbReference>
<dbReference type="NCBIfam" id="TIGR00071">
    <property type="entry name" value="hisT_truA"/>
    <property type="match status" value="1"/>
</dbReference>
<dbReference type="PANTHER" id="PTHR11142">
    <property type="entry name" value="PSEUDOURIDYLATE SYNTHASE"/>
    <property type="match status" value="1"/>
</dbReference>
<dbReference type="PANTHER" id="PTHR11142:SF0">
    <property type="entry name" value="TRNA PSEUDOURIDINE SYNTHASE-LIKE 1"/>
    <property type="match status" value="1"/>
</dbReference>
<dbReference type="Pfam" id="PF01416">
    <property type="entry name" value="PseudoU_synth_1"/>
    <property type="match status" value="2"/>
</dbReference>
<dbReference type="PIRSF" id="PIRSF001430">
    <property type="entry name" value="tRNA_psdUrid_synth"/>
    <property type="match status" value="1"/>
</dbReference>
<dbReference type="SUPFAM" id="SSF55120">
    <property type="entry name" value="Pseudouridine synthase"/>
    <property type="match status" value="1"/>
</dbReference>
<keyword id="KW-0413">Isomerase</keyword>
<keyword id="KW-1185">Reference proteome</keyword>
<keyword id="KW-0819">tRNA processing</keyword>
<feature type="chain" id="PRO_1000194551" description="tRNA pseudouridine synthase A">
    <location>
        <begin position="1"/>
        <end position="270"/>
    </location>
</feature>
<feature type="region of interest" description="RNA binding" evidence="1">
    <location>
        <begin position="107"/>
        <end position="111"/>
    </location>
</feature>
<feature type="region of interest" description="Interaction with tRNA" evidence="1">
    <location>
        <begin position="168"/>
        <end position="172"/>
    </location>
</feature>
<feature type="active site" description="Nucleophile" evidence="1">
    <location>
        <position position="60"/>
    </location>
</feature>
<feature type="binding site" evidence="1">
    <location>
        <position position="118"/>
    </location>
    <ligand>
        <name>substrate</name>
    </ligand>
</feature>
<feature type="site" description="Interaction with tRNA; Important for base-flipping" evidence="1">
    <location>
        <position position="58"/>
    </location>
</feature>
<feature type="site" description="Interaction with tRNA" evidence="1">
    <location>
        <position position="78"/>
    </location>
</feature>
<feature type="site" description="Interaction with tRNA" evidence="1">
    <location>
        <position position="110"/>
    </location>
</feature>
<feature type="site" description="Interaction with tRNA" evidence="1">
    <location>
        <position position="126"/>
    </location>
</feature>
<feature type="site" description="Interaction with tRNA" evidence="1">
    <location>
        <position position="139"/>
    </location>
</feature>